<protein>
    <recommendedName>
        <fullName evidence="1">Large ribosomal subunit protein bL20c</fullName>
    </recommendedName>
    <alternativeName>
        <fullName evidence="2">50S ribosomal protein L20, chloroplastic</fullName>
    </alternativeName>
</protein>
<geneLocation type="chloroplast"/>
<gene>
    <name evidence="1" type="primary">rpl20</name>
</gene>
<accession>A8SEC6</accession>
<dbReference type="EMBL" id="EF614270">
    <property type="protein sequence ID" value="ABQ81473.1"/>
    <property type="molecule type" value="Genomic_DNA"/>
</dbReference>
<dbReference type="RefSeq" id="YP_001542470.1">
    <property type="nucleotide sequence ID" value="NC_009962.1"/>
</dbReference>
<dbReference type="SMR" id="A8SEC6"/>
<dbReference type="GeneID" id="5729458"/>
<dbReference type="GO" id="GO:0009507">
    <property type="term" value="C:chloroplast"/>
    <property type="evidence" value="ECO:0007669"/>
    <property type="project" value="UniProtKB-SubCell"/>
</dbReference>
<dbReference type="GO" id="GO:1990904">
    <property type="term" value="C:ribonucleoprotein complex"/>
    <property type="evidence" value="ECO:0007669"/>
    <property type="project" value="UniProtKB-KW"/>
</dbReference>
<dbReference type="GO" id="GO:0005840">
    <property type="term" value="C:ribosome"/>
    <property type="evidence" value="ECO:0007669"/>
    <property type="project" value="UniProtKB-KW"/>
</dbReference>
<dbReference type="GO" id="GO:0019843">
    <property type="term" value="F:rRNA binding"/>
    <property type="evidence" value="ECO:0007669"/>
    <property type="project" value="UniProtKB-UniRule"/>
</dbReference>
<dbReference type="GO" id="GO:0003735">
    <property type="term" value="F:structural constituent of ribosome"/>
    <property type="evidence" value="ECO:0007669"/>
    <property type="project" value="InterPro"/>
</dbReference>
<dbReference type="GO" id="GO:0000027">
    <property type="term" value="P:ribosomal large subunit assembly"/>
    <property type="evidence" value="ECO:0007669"/>
    <property type="project" value="UniProtKB-UniRule"/>
</dbReference>
<dbReference type="GO" id="GO:0006412">
    <property type="term" value="P:translation"/>
    <property type="evidence" value="ECO:0007669"/>
    <property type="project" value="InterPro"/>
</dbReference>
<dbReference type="CDD" id="cd07026">
    <property type="entry name" value="Ribosomal_L20"/>
    <property type="match status" value="1"/>
</dbReference>
<dbReference type="FunFam" id="1.10.1900.20:FF:000001">
    <property type="entry name" value="50S ribosomal protein L20"/>
    <property type="match status" value="1"/>
</dbReference>
<dbReference type="Gene3D" id="6.10.160.10">
    <property type="match status" value="1"/>
</dbReference>
<dbReference type="Gene3D" id="1.10.1900.20">
    <property type="entry name" value="Ribosomal protein L20"/>
    <property type="match status" value="1"/>
</dbReference>
<dbReference type="HAMAP" id="MF_00382">
    <property type="entry name" value="Ribosomal_bL20"/>
    <property type="match status" value="1"/>
</dbReference>
<dbReference type="InterPro" id="IPR005813">
    <property type="entry name" value="Ribosomal_bL20"/>
</dbReference>
<dbReference type="InterPro" id="IPR049946">
    <property type="entry name" value="RIBOSOMAL_L20_CS"/>
</dbReference>
<dbReference type="InterPro" id="IPR035566">
    <property type="entry name" value="Ribosomal_protein_bL20_C"/>
</dbReference>
<dbReference type="NCBIfam" id="TIGR01032">
    <property type="entry name" value="rplT_bact"/>
    <property type="match status" value="1"/>
</dbReference>
<dbReference type="PANTHER" id="PTHR10986">
    <property type="entry name" value="39S RIBOSOMAL PROTEIN L20"/>
    <property type="match status" value="1"/>
</dbReference>
<dbReference type="Pfam" id="PF00453">
    <property type="entry name" value="Ribosomal_L20"/>
    <property type="match status" value="1"/>
</dbReference>
<dbReference type="PRINTS" id="PR00062">
    <property type="entry name" value="RIBOSOMALL20"/>
</dbReference>
<dbReference type="SUPFAM" id="SSF74731">
    <property type="entry name" value="Ribosomal protein L20"/>
    <property type="match status" value="1"/>
</dbReference>
<dbReference type="PROSITE" id="PS00937">
    <property type="entry name" value="RIBOSOMAL_L20"/>
    <property type="match status" value="1"/>
</dbReference>
<evidence type="ECO:0000255" key="1">
    <source>
        <dbReference type="HAMAP-Rule" id="MF_00382"/>
    </source>
</evidence>
<evidence type="ECO:0000305" key="2"/>
<sequence length="117" mass="14105">MTRVKRGYIARRRRTKIRLFASTFRGAHSRLTRTSTQQKMRALVSTHRDRGRQKRDFRRLWITRINAVTHENRVSYSYSRLIHDLYKKQLLLNRKILAQIAISNRNCLYTICNESIK</sequence>
<comment type="function">
    <text evidence="1">Binds directly to 23S ribosomal RNA and is necessary for the in vitro assembly process of the 50S ribosomal subunit. It is not involved in the protein synthesizing functions of that subunit.</text>
</comment>
<comment type="subcellular location">
    <subcellularLocation>
        <location>Plastid</location>
        <location>Chloroplast</location>
    </subcellularLocation>
</comment>
<comment type="similarity">
    <text evidence="1">Belongs to the bacterial ribosomal protein bL20 family.</text>
</comment>
<feature type="chain" id="PRO_0000355493" description="Large ribosomal subunit protein bL20c">
    <location>
        <begin position="1"/>
        <end position="117"/>
    </location>
</feature>
<keyword id="KW-0150">Chloroplast</keyword>
<keyword id="KW-0934">Plastid</keyword>
<keyword id="KW-0687">Ribonucleoprotein</keyword>
<keyword id="KW-0689">Ribosomal protein</keyword>
<keyword id="KW-0694">RNA-binding</keyword>
<keyword id="KW-0699">rRNA-binding</keyword>
<reference key="1">
    <citation type="journal article" date="2007" name="Proc. Natl. Acad. Sci. U.S.A.">
        <title>Using plastid genome-scale data to resolve enigmatic relationships among basal angiosperms.</title>
        <authorList>
            <person name="Moore M.J."/>
            <person name="Bell C.D."/>
            <person name="Soltis P.S."/>
            <person name="Soltis D.E."/>
        </authorList>
    </citation>
    <scope>NUCLEOTIDE SEQUENCE [LARGE SCALE GENOMIC DNA]</scope>
</reference>
<organism>
    <name type="scientific">Ceratophyllum demersum</name>
    <name type="common">Rigid hornwort</name>
    <name type="synonym">Coontail</name>
    <dbReference type="NCBI Taxonomy" id="4428"/>
    <lineage>
        <taxon>Eukaryota</taxon>
        <taxon>Viridiplantae</taxon>
        <taxon>Streptophyta</taxon>
        <taxon>Embryophyta</taxon>
        <taxon>Tracheophyta</taxon>
        <taxon>Spermatophyta</taxon>
        <taxon>Magnoliopsida</taxon>
        <taxon>Ceratophyllales</taxon>
        <taxon>Ceratophyllaceae</taxon>
        <taxon>Ceratophyllum</taxon>
    </lineage>
</organism>
<name>RK20_CERDE</name>
<proteinExistence type="inferred from homology"/>